<evidence type="ECO:0000250" key="1"/>
<evidence type="ECO:0000255" key="2">
    <source>
        <dbReference type="HAMAP-Rule" id="MF_00103"/>
    </source>
</evidence>
<protein>
    <recommendedName>
        <fullName evidence="2">Formamidopyrimidine-DNA glycosylase</fullName>
        <shortName evidence="2">Fapy-DNA glycosylase</shortName>
        <ecNumber evidence="2">3.2.2.23</ecNumber>
    </recommendedName>
    <alternativeName>
        <fullName evidence="2">DNA-(apurinic or apyrimidinic site) lyase MutM</fullName>
        <shortName evidence="2">AP lyase MutM</shortName>
        <ecNumber evidence="2">4.2.99.18</ecNumber>
    </alternativeName>
</protein>
<proteinExistence type="inferred from homology"/>
<comment type="function">
    <text evidence="2">Involved in base excision repair of DNA damaged by oxidation or by mutagenic agents. Acts as a DNA glycosylase that recognizes and removes damaged bases. Has a preference for oxidized purines, such as 7,8-dihydro-8-oxoguanine (8-oxoG). Has AP (apurinic/apyrimidinic) lyase activity and introduces nicks in the DNA strand. Cleaves the DNA backbone by beta-delta elimination to generate a single-strand break at the site of the removed base with both 3'- and 5'-phosphates.</text>
</comment>
<comment type="catalytic activity">
    <reaction evidence="2">
        <text>Hydrolysis of DNA containing ring-opened 7-methylguanine residues, releasing 2,6-diamino-4-hydroxy-5-(N-methyl)formamidopyrimidine.</text>
        <dbReference type="EC" id="3.2.2.23"/>
    </reaction>
</comment>
<comment type="catalytic activity">
    <reaction evidence="2">
        <text>2'-deoxyribonucleotide-(2'-deoxyribose 5'-phosphate)-2'-deoxyribonucleotide-DNA = a 3'-end 2'-deoxyribonucleotide-(2,3-dehydro-2,3-deoxyribose 5'-phosphate)-DNA + a 5'-end 5'-phospho-2'-deoxyribonucleoside-DNA + H(+)</text>
        <dbReference type="Rhea" id="RHEA:66592"/>
        <dbReference type="Rhea" id="RHEA-COMP:13180"/>
        <dbReference type="Rhea" id="RHEA-COMP:16897"/>
        <dbReference type="Rhea" id="RHEA-COMP:17067"/>
        <dbReference type="ChEBI" id="CHEBI:15378"/>
        <dbReference type="ChEBI" id="CHEBI:136412"/>
        <dbReference type="ChEBI" id="CHEBI:157695"/>
        <dbReference type="ChEBI" id="CHEBI:167181"/>
        <dbReference type="EC" id="4.2.99.18"/>
    </reaction>
</comment>
<comment type="cofactor">
    <cofactor evidence="2">
        <name>Zn(2+)</name>
        <dbReference type="ChEBI" id="CHEBI:29105"/>
    </cofactor>
    <text evidence="2">Binds 1 zinc ion per subunit.</text>
</comment>
<comment type="subunit">
    <text evidence="2">Monomer.</text>
</comment>
<comment type="similarity">
    <text evidence="2">Belongs to the FPG family.</text>
</comment>
<accession>A5EXK6</accession>
<feature type="initiator methionine" description="Removed" evidence="1">
    <location>
        <position position="1"/>
    </location>
</feature>
<feature type="chain" id="PRO_1000008693" description="Formamidopyrimidine-DNA glycosylase">
    <location>
        <begin position="2"/>
        <end position="272"/>
    </location>
</feature>
<feature type="zinc finger region" description="FPG-type" evidence="2">
    <location>
        <begin position="238"/>
        <end position="272"/>
    </location>
</feature>
<feature type="active site" description="Schiff-base intermediate with DNA" evidence="2">
    <location>
        <position position="2"/>
    </location>
</feature>
<feature type="active site" description="Proton donor" evidence="2">
    <location>
        <position position="3"/>
    </location>
</feature>
<feature type="active site" description="Proton donor; for beta-elimination activity" evidence="2">
    <location>
        <position position="58"/>
    </location>
</feature>
<feature type="active site" description="Proton donor; for delta-elimination activity" evidence="2">
    <location>
        <position position="262"/>
    </location>
</feature>
<feature type="binding site" evidence="2">
    <location>
        <position position="93"/>
    </location>
    <ligand>
        <name>DNA</name>
        <dbReference type="ChEBI" id="CHEBI:16991"/>
    </ligand>
</feature>
<feature type="binding site" evidence="2">
    <location>
        <position position="112"/>
    </location>
    <ligand>
        <name>DNA</name>
        <dbReference type="ChEBI" id="CHEBI:16991"/>
    </ligand>
</feature>
<feature type="binding site" evidence="2">
    <location>
        <position position="153"/>
    </location>
    <ligand>
        <name>DNA</name>
        <dbReference type="ChEBI" id="CHEBI:16991"/>
    </ligand>
</feature>
<keyword id="KW-0227">DNA damage</keyword>
<keyword id="KW-0234">DNA repair</keyword>
<keyword id="KW-0238">DNA-binding</keyword>
<keyword id="KW-0326">Glycosidase</keyword>
<keyword id="KW-0378">Hydrolase</keyword>
<keyword id="KW-0456">Lyase</keyword>
<keyword id="KW-0479">Metal-binding</keyword>
<keyword id="KW-0511">Multifunctional enzyme</keyword>
<keyword id="KW-1185">Reference proteome</keyword>
<keyword id="KW-0862">Zinc</keyword>
<keyword id="KW-0863">Zinc-finger</keyword>
<organism>
    <name type="scientific">Dichelobacter nodosus (strain VCS1703A)</name>
    <dbReference type="NCBI Taxonomy" id="246195"/>
    <lineage>
        <taxon>Bacteria</taxon>
        <taxon>Pseudomonadati</taxon>
        <taxon>Pseudomonadota</taxon>
        <taxon>Gammaproteobacteria</taxon>
        <taxon>Cardiobacteriales</taxon>
        <taxon>Cardiobacteriaceae</taxon>
        <taxon>Dichelobacter</taxon>
    </lineage>
</organism>
<reference key="1">
    <citation type="journal article" date="2007" name="Nat. Biotechnol.">
        <title>Genome sequence and identification of candidate vaccine antigens from the animal pathogen Dichelobacter nodosus.</title>
        <authorList>
            <person name="Myers G.S.A."/>
            <person name="Parker D."/>
            <person name="Al-Hasani K."/>
            <person name="Kennan R.M."/>
            <person name="Seemann T."/>
            <person name="Ren Q."/>
            <person name="Badger J.H."/>
            <person name="Selengut J.D."/>
            <person name="Deboy R.T."/>
            <person name="Tettelin H."/>
            <person name="Boyce J.D."/>
            <person name="McCarl V.P."/>
            <person name="Han X."/>
            <person name="Nelson W.C."/>
            <person name="Madupu R."/>
            <person name="Mohamoud Y."/>
            <person name="Holley T."/>
            <person name="Fedorova N."/>
            <person name="Khouri H."/>
            <person name="Bottomley S.P."/>
            <person name="Whittington R.J."/>
            <person name="Adler B."/>
            <person name="Songer J.G."/>
            <person name="Rood J.I."/>
            <person name="Paulsen I.T."/>
        </authorList>
    </citation>
    <scope>NUCLEOTIDE SEQUENCE [LARGE SCALE GENOMIC DNA]</scope>
    <source>
        <strain>VCS1703A</strain>
    </source>
</reference>
<gene>
    <name evidence="2" type="primary">mutM</name>
    <name evidence="2" type="synonym">fpg</name>
    <name type="ordered locus">DNO_1135</name>
</gene>
<dbReference type="EC" id="3.2.2.23" evidence="2"/>
<dbReference type="EC" id="4.2.99.18" evidence="2"/>
<dbReference type="EMBL" id="CP000513">
    <property type="protein sequence ID" value="ABQ13185.1"/>
    <property type="molecule type" value="Genomic_DNA"/>
</dbReference>
<dbReference type="RefSeq" id="WP_012031438.1">
    <property type="nucleotide sequence ID" value="NC_009446.1"/>
</dbReference>
<dbReference type="SMR" id="A5EXK6"/>
<dbReference type="STRING" id="246195.DNO_1135"/>
<dbReference type="KEGG" id="dno:DNO_1135"/>
<dbReference type="eggNOG" id="COG0266">
    <property type="taxonomic scope" value="Bacteria"/>
</dbReference>
<dbReference type="HOGENOM" id="CLU_038423_1_1_6"/>
<dbReference type="OrthoDB" id="9800855at2"/>
<dbReference type="Proteomes" id="UP000000248">
    <property type="component" value="Chromosome"/>
</dbReference>
<dbReference type="GO" id="GO:0034039">
    <property type="term" value="F:8-oxo-7,8-dihydroguanine DNA N-glycosylase activity"/>
    <property type="evidence" value="ECO:0007669"/>
    <property type="project" value="TreeGrafter"/>
</dbReference>
<dbReference type="GO" id="GO:0140078">
    <property type="term" value="F:class I DNA-(apurinic or apyrimidinic site) endonuclease activity"/>
    <property type="evidence" value="ECO:0007669"/>
    <property type="project" value="UniProtKB-EC"/>
</dbReference>
<dbReference type="GO" id="GO:0003684">
    <property type="term" value="F:damaged DNA binding"/>
    <property type="evidence" value="ECO:0007669"/>
    <property type="project" value="InterPro"/>
</dbReference>
<dbReference type="GO" id="GO:0008270">
    <property type="term" value="F:zinc ion binding"/>
    <property type="evidence" value="ECO:0007669"/>
    <property type="project" value="UniProtKB-UniRule"/>
</dbReference>
<dbReference type="GO" id="GO:0006284">
    <property type="term" value="P:base-excision repair"/>
    <property type="evidence" value="ECO:0007669"/>
    <property type="project" value="InterPro"/>
</dbReference>
<dbReference type="CDD" id="cd08966">
    <property type="entry name" value="EcFpg-like_N"/>
    <property type="match status" value="1"/>
</dbReference>
<dbReference type="FunFam" id="1.10.8.50:FF:000003">
    <property type="entry name" value="Formamidopyrimidine-DNA glycosylase"/>
    <property type="match status" value="1"/>
</dbReference>
<dbReference type="FunFam" id="3.20.190.10:FF:000001">
    <property type="entry name" value="Formamidopyrimidine-DNA glycosylase"/>
    <property type="match status" value="1"/>
</dbReference>
<dbReference type="Gene3D" id="1.10.8.50">
    <property type="match status" value="1"/>
</dbReference>
<dbReference type="Gene3D" id="3.20.190.10">
    <property type="entry name" value="MutM-like, N-terminal"/>
    <property type="match status" value="1"/>
</dbReference>
<dbReference type="HAMAP" id="MF_00103">
    <property type="entry name" value="Fapy_DNA_glycosyl"/>
    <property type="match status" value="1"/>
</dbReference>
<dbReference type="InterPro" id="IPR015886">
    <property type="entry name" value="DNA_glyclase/AP_lyase_DNA-bd"/>
</dbReference>
<dbReference type="InterPro" id="IPR015887">
    <property type="entry name" value="DNA_glyclase_Znf_dom_DNA_BS"/>
</dbReference>
<dbReference type="InterPro" id="IPR020629">
    <property type="entry name" value="Formamido-pyr_DNA_Glyclase"/>
</dbReference>
<dbReference type="InterPro" id="IPR012319">
    <property type="entry name" value="FPG_cat"/>
</dbReference>
<dbReference type="InterPro" id="IPR035937">
    <property type="entry name" value="MutM-like_N-ter"/>
</dbReference>
<dbReference type="InterPro" id="IPR010979">
    <property type="entry name" value="Ribosomal_uS13-like_H2TH"/>
</dbReference>
<dbReference type="InterPro" id="IPR000214">
    <property type="entry name" value="Znf_DNA_glyclase/AP_lyase"/>
</dbReference>
<dbReference type="InterPro" id="IPR010663">
    <property type="entry name" value="Znf_FPG/IleRS"/>
</dbReference>
<dbReference type="NCBIfam" id="TIGR00577">
    <property type="entry name" value="fpg"/>
    <property type="match status" value="1"/>
</dbReference>
<dbReference type="NCBIfam" id="NF002211">
    <property type="entry name" value="PRK01103.1"/>
    <property type="match status" value="1"/>
</dbReference>
<dbReference type="PANTHER" id="PTHR22993">
    <property type="entry name" value="FORMAMIDOPYRIMIDINE-DNA GLYCOSYLASE"/>
    <property type="match status" value="1"/>
</dbReference>
<dbReference type="PANTHER" id="PTHR22993:SF9">
    <property type="entry name" value="FORMAMIDOPYRIMIDINE-DNA GLYCOSYLASE"/>
    <property type="match status" value="1"/>
</dbReference>
<dbReference type="Pfam" id="PF01149">
    <property type="entry name" value="Fapy_DNA_glyco"/>
    <property type="match status" value="1"/>
</dbReference>
<dbReference type="Pfam" id="PF06831">
    <property type="entry name" value="H2TH"/>
    <property type="match status" value="1"/>
</dbReference>
<dbReference type="Pfam" id="PF06827">
    <property type="entry name" value="zf-FPG_IleRS"/>
    <property type="match status" value="1"/>
</dbReference>
<dbReference type="SMART" id="SM00898">
    <property type="entry name" value="Fapy_DNA_glyco"/>
    <property type="match status" value="1"/>
</dbReference>
<dbReference type="SMART" id="SM01232">
    <property type="entry name" value="H2TH"/>
    <property type="match status" value="1"/>
</dbReference>
<dbReference type="SUPFAM" id="SSF57716">
    <property type="entry name" value="Glucocorticoid receptor-like (DNA-binding domain)"/>
    <property type="match status" value="1"/>
</dbReference>
<dbReference type="SUPFAM" id="SSF81624">
    <property type="entry name" value="N-terminal domain of MutM-like DNA repair proteins"/>
    <property type="match status" value="1"/>
</dbReference>
<dbReference type="SUPFAM" id="SSF46946">
    <property type="entry name" value="S13-like H2TH domain"/>
    <property type="match status" value="1"/>
</dbReference>
<dbReference type="PROSITE" id="PS51068">
    <property type="entry name" value="FPG_CAT"/>
    <property type="match status" value="1"/>
</dbReference>
<dbReference type="PROSITE" id="PS01242">
    <property type="entry name" value="ZF_FPG_1"/>
    <property type="match status" value="1"/>
</dbReference>
<dbReference type="PROSITE" id="PS51066">
    <property type="entry name" value="ZF_FPG_2"/>
    <property type="match status" value="1"/>
</dbReference>
<sequence>MPELPEVETCKKGLRPLLCQKTITAVDVRAARLREPLDAIALSQLIHCQITEITRRAKYLIININREDIAVLVHLGMSGSLRVLPQTEPIKKHDHIIITLNDGYSLRYHDPRRFGLFTVFHAQKPHRLLQHLGIEPLDDSCTGDVLHQHCQKRKIKINSLIMNQNIIVGIGNIYATEALFLSGIRPDRPAQTLSAAECASLMAQIKTLLTAAIARGGTTLRDFSAPDGHAGYFQQQLHVYGKSGQHCPKCGNILEDLKISNRGTVYCPHCQR</sequence>
<name>FPG_DICNV</name>